<comment type="function">
    <text evidence="1">Binds directly to 23S ribosomal RNA and is necessary for the in vitro assembly process of the 50S ribosomal subunit. It is not involved in the protein synthesizing functions of that subunit.</text>
</comment>
<comment type="similarity">
    <text evidence="1">Belongs to the bacterial ribosomal protein bL20 family.</text>
</comment>
<evidence type="ECO:0000255" key="1">
    <source>
        <dbReference type="HAMAP-Rule" id="MF_00382"/>
    </source>
</evidence>
<evidence type="ECO:0000305" key="2"/>
<keyword id="KW-1185">Reference proteome</keyword>
<keyword id="KW-0687">Ribonucleoprotein</keyword>
<keyword id="KW-0689">Ribosomal protein</keyword>
<keyword id="KW-0694">RNA-binding</keyword>
<keyword id="KW-0699">rRNA-binding</keyword>
<reference key="1">
    <citation type="submission" date="2007-08" db="EMBL/GenBank/DDBJ databases">
        <authorList>
            <consortium name="The Citrobacter koseri Genome Sequencing Project"/>
            <person name="McClelland M."/>
            <person name="Sanderson E.K."/>
            <person name="Porwollik S."/>
            <person name="Spieth J."/>
            <person name="Clifton W.S."/>
            <person name="Latreille P."/>
            <person name="Courtney L."/>
            <person name="Wang C."/>
            <person name="Pepin K."/>
            <person name="Bhonagiri V."/>
            <person name="Nash W."/>
            <person name="Johnson M."/>
            <person name="Thiruvilangam P."/>
            <person name="Wilson R."/>
        </authorList>
    </citation>
    <scope>NUCLEOTIDE SEQUENCE [LARGE SCALE GENOMIC DNA]</scope>
    <source>
        <strain>ATCC BAA-895 / CDC 4225-83 / SGSC4696</strain>
    </source>
</reference>
<proteinExistence type="inferred from homology"/>
<accession>A8AHA8</accession>
<sequence>MARVKRGVIARARHKKILKQAKGYYGARSRVYRVAFQAVIKAGQYAYRDRRQRKRQFRQLWIARINAAARQNGISYSKFINGLKKASVEIDRKILADIAVFDKVAFTALVEKAKAALA</sequence>
<protein>
    <recommendedName>
        <fullName evidence="1">Large ribosomal subunit protein bL20</fullName>
    </recommendedName>
    <alternativeName>
        <fullName evidence="2">50S ribosomal protein L20</fullName>
    </alternativeName>
</protein>
<name>RL20_CITK8</name>
<gene>
    <name evidence="1" type="primary">rplT</name>
    <name type="ordered locus">CKO_01742</name>
</gene>
<feature type="chain" id="PRO_1000048955" description="Large ribosomal subunit protein bL20">
    <location>
        <begin position="1"/>
        <end position="118"/>
    </location>
</feature>
<dbReference type="EMBL" id="CP000822">
    <property type="protein sequence ID" value="ABV12871.1"/>
    <property type="molecule type" value="Genomic_DNA"/>
</dbReference>
<dbReference type="RefSeq" id="WP_000124850.1">
    <property type="nucleotide sequence ID" value="NC_009792.1"/>
</dbReference>
<dbReference type="SMR" id="A8AHA8"/>
<dbReference type="STRING" id="290338.CKO_01742"/>
<dbReference type="GeneID" id="98388757"/>
<dbReference type="KEGG" id="cko:CKO_01742"/>
<dbReference type="HOGENOM" id="CLU_123265_0_1_6"/>
<dbReference type="OrthoDB" id="9808966at2"/>
<dbReference type="Proteomes" id="UP000008148">
    <property type="component" value="Chromosome"/>
</dbReference>
<dbReference type="GO" id="GO:1990904">
    <property type="term" value="C:ribonucleoprotein complex"/>
    <property type="evidence" value="ECO:0007669"/>
    <property type="project" value="UniProtKB-KW"/>
</dbReference>
<dbReference type="GO" id="GO:0005840">
    <property type="term" value="C:ribosome"/>
    <property type="evidence" value="ECO:0007669"/>
    <property type="project" value="UniProtKB-KW"/>
</dbReference>
<dbReference type="GO" id="GO:0019843">
    <property type="term" value="F:rRNA binding"/>
    <property type="evidence" value="ECO:0007669"/>
    <property type="project" value="UniProtKB-UniRule"/>
</dbReference>
<dbReference type="GO" id="GO:0003735">
    <property type="term" value="F:structural constituent of ribosome"/>
    <property type="evidence" value="ECO:0007669"/>
    <property type="project" value="InterPro"/>
</dbReference>
<dbReference type="GO" id="GO:0000027">
    <property type="term" value="P:ribosomal large subunit assembly"/>
    <property type="evidence" value="ECO:0007669"/>
    <property type="project" value="UniProtKB-UniRule"/>
</dbReference>
<dbReference type="GO" id="GO:0006412">
    <property type="term" value="P:translation"/>
    <property type="evidence" value="ECO:0007669"/>
    <property type="project" value="InterPro"/>
</dbReference>
<dbReference type="CDD" id="cd07026">
    <property type="entry name" value="Ribosomal_L20"/>
    <property type="match status" value="1"/>
</dbReference>
<dbReference type="FunFam" id="1.10.1900.20:FF:000001">
    <property type="entry name" value="50S ribosomal protein L20"/>
    <property type="match status" value="1"/>
</dbReference>
<dbReference type="Gene3D" id="6.10.160.10">
    <property type="match status" value="1"/>
</dbReference>
<dbReference type="Gene3D" id="1.10.1900.20">
    <property type="entry name" value="Ribosomal protein L20"/>
    <property type="match status" value="1"/>
</dbReference>
<dbReference type="HAMAP" id="MF_00382">
    <property type="entry name" value="Ribosomal_bL20"/>
    <property type="match status" value="1"/>
</dbReference>
<dbReference type="InterPro" id="IPR005813">
    <property type="entry name" value="Ribosomal_bL20"/>
</dbReference>
<dbReference type="InterPro" id="IPR049946">
    <property type="entry name" value="RIBOSOMAL_L20_CS"/>
</dbReference>
<dbReference type="InterPro" id="IPR035566">
    <property type="entry name" value="Ribosomal_protein_bL20_C"/>
</dbReference>
<dbReference type="NCBIfam" id="TIGR01032">
    <property type="entry name" value="rplT_bact"/>
    <property type="match status" value="1"/>
</dbReference>
<dbReference type="PANTHER" id="PTHR10986">
    <property type="entry name" value="39S RIBOSOMAL PROTEIN L20"/>
    <property type="match status" value="1"/>
</dbReference>
<dbReference type="Pfam" id="PF00453">
    <property type="entry name" value="Ribosomal_L20"/>
    <property type="match status" value="1"/>
</dbReference>
<dbReference type="PRINTS" id="PR00062">
    <property type="entry name" value="RIBOSOMALL20"/>
</dbReference>
<dbReference type="SUPFAM" id="SSF74731">
    <property type="entry name" value="Ribosomal protein L20"/>
    <property type="match status" value="1"/>
</dbReference>
<dbReference type="PROSITE" id="PS00937">
    <property type="entry name" value="RIBOSOMAL_L20"/>
    <property type="match status" value="1"/>
</dbReference>
<organism>
    <name type="scientific">Citrobacter koseri (strain ATCC BAA-895 / CDC 4225-83 / SGSC4696)</name>
    <dbReference type="NCBI Taxonomy" id="290338"/>
    <lineage>
        <taxon>Bacteria</taxon>
        <taxon>Pseudomonadati</taxon>
        <taxon>Pseudomonadota</taxon>
        <taxon>Gammaproteobacteria</taxon>
        <taxon>Enterobacterales</taxon>
        <taxon>Enterobacteriaceae</taxon>
        <taxon>Citrobacter</taxon>
    </lineage>
</organism>